<accession>B4SHX1</accession>
<proteinExistence type="inferred from homology"/>
<keyword id="KW-0145">Chemotaxis</keyword>
<keyword id="KW-0378">Hydrolase</keyword>
<protein>
    <recommendedName>
        <fullName evidence="1">Probable chemoreceptor glutamine deamidase CheD</fullName>
        <ecNumber evidence="1">3.5.1.44</ecNumber>
    </recommendedName>
</protein>
<sequence length="198" mass="21648">MNASLRTDDVMRYQDARFKTIAAKLLPTQYLVVDDTTALTTTLGSCVAACLRDPVLKIGGMNHFLLPEGNAGDGAPARYGSYAMELLINDMLKRGAHRKRIEAKVFGGANVLKGFTSNPVGTRNAEFVRQYLQAEHIPIIAEDLCGIHPRKIWFFADTGRVVVQRLPHAHEAEVAATESAVRARLSKAPVTGGVELFE</sequence>
<gene>
    <name evidence="1" type="primary">cheD</name>
    <name type="ordered locus">Smal_1844</name>
</gene>
<dbReference type="EC" id="3.5.1.44" evidence="1"/>
<dbReference type="EMBL" id="CP001111">
    <property type="protein sequence ID" value="ACF51548.1"/>
    <property type="molecule type" value="Genomic_DNA"/>
</dbReference>
<dbReference type="RefSeq" id="WP_008264676.1">
    <property type="nucleotide sequence ID" value="NC_011071.1"/>
</dbReference>
<dbReference type="SMR" id="B4SHX1"/>
<dbReference type="STRING" id="391008.Smal_1844"/>
<dbReference type="KEGG" id="smt:Smal_1844"/>
<dbReference type="eggNOG" id="COG1871">
    <property type="taxonomic scope" value="Bacteria"/>
</dbReference>
<dbReference type="HOGENOM" id="CLU_087854_0_0_6"/>
<dbReference type="OrthoDB" id="9807202at2"/>
<dbReference type="Proteomes" id="UP000001867">
    <property type="component" value="Chromosome"/>
</dbReference>
<dbReference type="GO" id="GO:0050568">
    <property type="term" value="F:protein-glutamine glutaminase activity"/>
    <property type="evidence" value="ECO:0007669"/>
    <property type="project" value="UniProtKB-UniRule"/>
</dbReference>
<dbReference type="GO" id="GO:0006935">
    <property type="term" value="P:chemotaxis"/>
    <property type="evidence" value="ECO:0007669"/>
    <property type="project" value="UniProtKB-UniRule"/>
</dbReference>
<dbReference type="CDD" id="cd16352">
    <property type="entry name" value="CheD"/>
    <property type="match status" value="1"/>
</dbReference>
<dbReference type="Gene3D" id="3.30.1330.200">
    <property type="match status" value="1"/>
</dbReference>
<dbReference type="HAMAP" id="MF_01440">
    <property type="entry name" value="CheD"/>
    <property type="match status" value="1"/>
</dbReference>
<dbReference type="InterPro" id="IPR038592">
    <property type="entry name" value="CheD-like_sf"/>
</dbReference>
<dbReference type="InterPro" id="IPR005659">
    <property type="entry name" value="Chemorcpt_Glu_NH3ase_CheD"/>
</dbReference>
<dbReference type="InterPro" id="IPR011324">
    <property type="entry name" value="Cytotoxic_necrot_fac-like_cat"/>
</dbReference>
<dbReference type="NCBIfam" id="NF010013">
    <property type="entry name" value="PRK13487.1"/>
    <property type="match status" value="1"/>
</dbReference>
<dbReference type="PANTHER" id="PTHR35147">
    <property type="entry name" value="CHEMORECEPTOR GLUTAMINE DEAMIDASE CHED-RELATED"/>
    <property type="match status" value="1"/>
</dbReference>
<dbReference type="PANTHER" id="PTHR35147:SF2">
    <property type="entry name" value="CHEMORECEPTOR GLUTAMINE DEAMIDASE CHED-RELATED"/>
    <property type="match status" value="1"/>
</dbReference>
<dbReference type="Pfam" id="PF03975">
    <property type="entry name" value="CheD"/>
    <property type="match status" value="1"/>
</dbReference>
<dbReference type="SUPFAM" id="SSF64438">
    <property type="entry name" value="CNF1/YfiH-like putative cysteine hydrolases"/>
    <property type="match status" value="1"/>
</dbReference>
<organism>
    <name type="scientific">Stenotrophomonas maltophilia (strain R551-3)</name>
    <dbReference type="NCBI Taxonomy" id="391008"/>
    <lineage>
        <taxon>Bacteria</taxon>
        <taxon>Pseudomonadati</taxon>
        <taxon>Pseudomonadota</taxon>
        <taxon>Gammaproteobacteria</taxon>
        <taxon>Lysobacterales</taxon>
        <taxon>Lysobacteraceae</taxon>
        <taxon>Stenotrophomonas</taxon>
        <taxon>Stenotrophomonas maltophilia group</taxon>
    </lineage>
</organism>
<name>CHED_STRM5</name>
<feature type="chain" id="PRO_1000145895" description="Probable chemoreceptor glutamine deamidase CheD">
    <location>
        <begin position="1"/>
        <end position="198"/>
    </location>
</feature>
<reference key="1">
    <citation type="submission" date="2008-06" db="EMBL/GenBank/DDBJ databases">
        <title>Complete sequence of Stenotrophomonas maltophilia R551-3.</title>
        <authorList>
            <consortium name="US DOE Joint Genome Institute"/>
            <person name="Lucas S."/>
            <person name="Copeland A."/>
            <person name="Lapidus A."/>
            <person name="Glavina del Rio T."/>
            <person name="Dalin E."/>
            <person name="Tice H."/>
            <person name="Pitluck S."/>
            <person name="Chain P."/>
            <person name="Malfatti S."/>
            <person name="Shin M."/>
            <person name="Vergez L."/>
            <person name="Lang D."/>
            <person name="Schmutz J."/>
            <person name="Larimer F."/>
            <person name="Land M."/>
            <person name="Hauser L."/>
            <person name="Kyrpides N."/>
            <person name="Mikhailova N."/>
            <person name="Taghavi S."/>
            <person name="Monchy S."/>
            <person name="Newman L."/>
            <person name="Vangronsveld J."/>
            <person name="van der Lelie D."/>
            <person name="Richardson P."/>
        </authorList>
    </citation>
    <scope>NUCLEOTIDE SEQUENCE [LARGE SCALE GENOMIC DNA]</scope>
    <source>
        <strain>R551-3</strain>
    </source>
</reference>
<comment type="function">
    <text evidence="1">Probably deamidates glutamine residues to glutamate on methyl-accepting chemotaxis receptors (MCPs), playing an important role in chemotaxis.</text>
</comment>
<comment type="catalytic activity">
    <reaction evidence="1">
        <text>L-glutaminyl-[protein] + H2O = L-glutamyl-[protein] + NH4(+)</text>
        <dbReference type="Rhea" id="RHEA:16441"/>
        <dbReference type="Rhea" id="RHEA-COMP:10207"/>
        <dbReference type="Rhea" id="RHEA-COMP:10208"/>
        <dbReference type="ChEBI" id="CHEBI:15377"/>
        <dbReference type="ChEBI" id="CHEBI:28938"/>
        <dbReference type="ChEBI" id="CHEBI:29973"/>
        <dbReference type="ChEBI" id="CHEBI:30011"/>
        <dbReference type="EC" id="3.5.1.44"/>
    </reaction>
</comment>
<comment type="similarity">
    <text evidence="1">Belongs to the CheD family.</text>
</comment>
<evidence type="ECO:0000255" key="1">
    <source>
        <dbReference type="HAMAP-Rule" id="MF_01440"/>
    </source>
</evidence>